<comment type="function">
    <text evidence="1">Component of the SRB8-11 complex. The SRB8-11 complex is a regulatory module of the Mediator complex which is itself involved in regulation of basal and activated RNA polymerase II-dependent transcription. The SRB8-11 complex may be involved in the transcriptional repression of a subset of genes regulated by Mediator. It may inhibit the association of the Mediator complex with RNA polymerase II to form the holoenzyme complex. The SRB8-11 complex phosphorylates the C-terminal domain (CTD) of the largest subunit of RNA polymerase II (By similarity).</text>
</comment>
<comment type="subunit">
    <text evidence="1">Component of the SRB8-11 complex, a regulatory module of the Mediator complex.</text>
</comment>
<comment type="subcellular location">
    <subcellularLocation>
        <location evidence="2">Nucleus</location>
    </subcellularLocation>
</comment>
<comment type="similarity">
    <text evidence="2">Belongs to the cyclin family. Cyclin C subfamily.</text>
</comment>
<feature type="chain" id="PRO_0000314281" description="RNA polymerase II holoenzyme cyclin-like subunit">
    <location>
        <begin position="1"/>
        <end position="393"/>
    </location>
</feature>
<feature type="domain" description="Cyclin N-terminal">
    <location>
        <begin position="51"/>
        <end position="146"/>
    </location>
</feature>
<evidence type="ECO:0000250" key="1"/>
<evidence type="ECO:0000305" key="2"/>
<accession>Q4P101</accession>
<accession>A0A0D1BUP0</accession>
<proteinExistence type="inferred from homology"/>
<name>SSN8_MYCMD</name>
<keyword id="KW-0010">Activator</keyword>
<keyword id="KW-0195">Cyclin</keyword>
<keyword id="KW-0539">Nucleus</keyword>
<keyword id="KW-1185">Reference proteome</keyword>
<keyword id="KW-0678">Repressor</keyword>
<keyword id="KW-0804">Transcription</keyword>
<keyword id="KW-0805">Transcription regulation</keyword>
<dbReference type="EMBL" id="CM003161">
    <property type="protein sequence ID" value="KIS65832.1"/>
    <property type="molecule type" value="Genomic_DNA"/>
</dbReference>
<dbReference type="RefSeq" id="XP_011392572.1">
    <property type="nucleotide sequence ID" value="XM_011394270.1"/>
</dbReference>
<dbReference type="SMR" id="Q4P101"/>
<dbReference type="STRING" id="237631.Q4P101"/>
<dbReference type="EnsemblFungi" id="KIS65832">
    <property type="protein sequence ID" value="KIS65832"/>
    <property type="gene ID" value="UMAG_06212"/>
</dbReference>
<dbReference type="GeneID" id="23565878"/>
<dbReference type="KEGG" id="uma:UMAG_06212"/>
<dbReference type="VEuPathDB" id="FungiDB:UMAG_06212"/>
<dbReference type="eggNOG" id="KOG0794">
    <property type="taxonomic scope" value="Eukaryota"/>
</dbReference>
<dbReference type="HOGENOM" id="CLU_034754_5_1_1"/>
<dbReference type="InParanoid" id="Q4P101"/>
<dbReference type="OMA" id="DDGPRYW"/>
<dbReference type="OrthoDB" id="10266018at2759"/>
<dbReference type="Proteomes" id="UP000000561">
    <property type="component" value="Chromosome 22"/>
</dbReference>
<dbReference type="GO" id="GO:0016592">
    <property type="term" value="C:mediator complex"/>
    <property type="evidence" value="ECO:0000318"/>
    <property type="project" value="GO_Central"/>
</dbReference>
<dbReference type="GO" id="GO:0005634">
    <property type="term" value="C:nucleus"/>
    <property type="evidence" value="ECO:0000318"/>
    <property type="project" value="GO_Central"/>
</dbReference>
<dbReference type="GO" id="GO:0016538">
    <property type="term" value="F:cyclin-dependent protein serine/threonine kinase regulator activity"/>
    <property type="evidence" value="ECO:0000318"/>
    <property type="project" value="GO_Central"/>
</dbReference>
<dbReference type="GO" id="GO:0045944">
    <property type="term" value="P:positive regulation of transcription by RNA polymerase II"/>
    <property type="evidence" value="ECO:0000318"/>
    <property type="project" value="GO_Central"/>
</dbReference>
<dbReference type="CDD" id="cd20513">
    <property type="entry name" value="CYCLIN_CCNC_rpt1"/>
    <property type="match status" value="1"/>
</dbReference>
<dbReference type="CDD" id="cd20514">
    <property type="entry name" value="CYCLIN_CCNC_rpt2"/>
    <property type="match status" value="1"/>
</dbReference>
<dbReference type="FunFam" id="1.10.472.10:FF:000076">
    <property type="entry name" value="RNA polymerase II holoenzyme cyclin-like subunit"/>
    <property type="match status" value="1"/>
</dbReference>
<dbReference type="Gene3D" id="1.10.472.10">
    <property type="entry name" value="Cyclin-like"/>
    <property type="match status" value="2"/>
</dbReference>
<dbReference type="InterPro" id="IPR013763">
    <property type="entry name" value="Cyclin-like_dom"/>
</dbReference>
<dbReference type="InterPro" id="IPR036915">
    <property type="entry name" value="Cyclin-like_sf"/>
</dbReference>
<dbReference type="InterPro" id="IPR043198">
    <property type="entry name" value="Cyclin/Ssn8"/>
</dbReference>
<dbReference type="InterPro" id="IPR006671">
    <property type="entry name" value="Cyclin_N"/>
</dbReference>
<dbReference type="PANTHER" id="PTHR10026">
    <property type="entry name" value="CYCLIN"/>
    <property type="match status" value="1"/>
</dbReference>
<dbReference type="Pfam" id="PF00134">
    <property type="entry name" value="Cyclin_N"/>
    <property type="match status" value="1"/>
</dbReference>
<dbReference type="SMART" id="SM00385">
    <property type="entry name" value="CYCLIN"/>
    <property type="match status" value="1"/>
</dbReference>
<dbReference type="SUPFAM" id="SSF47954">
    <property type="entry name" value="Cyclin-like"/>
    <property type="match status" value="2"/>
</dbReference>
<reference key="1">
    <citation type="journal article" date="2006" name="Nature">
        <title>Insights from the genome of the biotrophic fungal plant pathogen Ustilago maydis.</title>
        <authorList>
            <person name="Kaemper J."/>
            <person name="Kahmann R."/>
            <person name="Boelker M."/>
            <person name="Ma L.-J."/>
            <person name="Brefort T."/>
            <person name="Saville B.J."/>
            <person name="Banuett F."/>
            <person name="Kronstad J.W."/>
            <person name="Gold S.E."/>
            <person name="Mueller O."/>
            <person name="Perlin M.H."/>
            <person name="Woesten H.A.B."/>
            <person name="de Vries R."/>
            <person name="Ruiz-Herrera J."/>
            <person name="Reynaga-Pena C.G."/>
            <person name="Snetselaar K."/>
            <person name="McCann M."/>
            <person name="Perez-Martin J."/>
            <person name="Feldbruegge M."/>
            <person name="Basse C.W."/>
            <person name="Steinberg G."/>
            <person name="Ibeas J.I."/>
            <person name="Holloman W."/>
            <person name="Guzman P."/>
            <person name="Farman M.L."/>
            <person name="Stajich J.E."/>
            <person name="Sentandreu R."/>
            <person name="Gonzalez-Prieto J.M."/>
            <person name="Kennell J.C."/>
            <person name="Molina L."/>
            <person name="Schirawski J."/>
            <person name="Mendoza-Mendoza A."/>
            <person name="Greilinger D."/>
            <person name="Muench K."/>
            <person name="Roessel N."/>
            <person name="Scherer M."/>
            <person name="Vranes M."/>
            <person name="Ladendorf O."/>
            <person name="Vincon V."/>
            <person name="Fuchs U."/>
            <person name="Sandrock B."/>
            <person name="Meng S."/>
            <person name="Ho E.C.H."/>
            <person name="Cahill M.J."/>
            <person name="Boyce K.J."/>
            <person name="Klose J."/>
            <person name="Klosterman S.J."/>
            <person name="Deelstra H.J."/>
            <person name="Ortiz-Castellanos L."/>
            <person name="Li W."/>
            <person name="Sanchez-Alonso P."/>
            <person name="Schreier P.H."/>
            <person name="Haeuser-Hahn I."/>
            <person name="Vaupel M."/>
            <person name="Koopmann E."/>
            <person name="Friedrich G."/>
            <person name="Voss H."/>
            <person name="Schlueter T."/>
            <person name="Margolis J."/>
            <person name="Platt D."/>
            <person name="Swimmer C."/>
            <person name="Gnirke A."/>
            <person name="Chen F."/>
            <person name="Vysotskaia V."/>
            <person name="Mannhaupt G."/>
            <person name="Gueldener U."/>
            <person name="Muensterkoetter M."/>
            <person name="Haase D."/>
            <person name="Oesterheld M."/>
            <person name="Mewes H.-W."/>
            <person name="Mauceli E.W."/>
            <person name="DeCaprio D."/>
            <person name="Wade C.M."/>
            <person name="Butler J."/>
            <person name="Young S.K."/>
            <person name="Jaffe D.B."/>
            <person name="Calvo S.E."/>
            <person name="Nusbaum C."/>
            <person name="Galagan J.E."/>
            <person name="Birren B.W."/>
        </authorList>
    </citation>
    <scope>NUCLEOTIDE SEQUENCE [LARGE SCALE GENOMIC DNA]</scope>
    <source>
        <strain>DSM 14603 / FGSC 9021 / UM521</strain>
    </source>
</reference>
<reference key="2">
    <citation type="submission" date="2014-09" db="EMBL/GenBank/DDBJ databases">
        <authorList>
            <person name="Gueldener U."/>
            <person name="Muensterkoetter M."/>
            <person name="Walter M.C."/>
            <person name="Mannhaupt G."/>
            <person name="Kahmann R."/>
        </authorList>
    </citation>
    <scope>GENOME REANNOTATION</scope>
    <source>
        <strain>DSM 14603 / FGSC 9021 / UM521</strain>
    </source>
</reference>
<sequence>MSANYWASTQCNNWLLDRPQLELARKEDLRYATRLECAALGVFFSNLLSLICKRLNLRQRVTASANVFFRRFFAKNSYSALDPFLVCATCVYVAAKVEESPIHIKSAVAEATRSFTEHGFRGMPTDHSSLAEMEFYLLEEMEFDMVLFHSYRSLIVMFEDYGSGSAVGSGNSIHERSAGAAGSGSGSGGSGMMIGLGIEAAAFGVTKGLASVEEGDAASAIAEEDKVQLNEFNDEVLLMCWFILNDTYKTDIPLMYPPYMVALASIWLGLSLHPPSFDKITASLHTMQTRRDEHHLSIQRILDNPASTPAELASAKREPSPPSQDALTFFASLNVSLPLLAEIVQEMVSAYSVQHQVQRLVSDGPGIVKLLERMRESRRVALIKDRDQTRTHA</sequence>
<gene>
    <name type="primary">SSN8</name>
    <name type="ORF">UMAG_06212</name>
</gene>
<organism>
    <name type="scientific">Mycosarcoma maydis</name>
    <name type="common">Corn smut fungus</name>
    <name type="synonym">Ustilago maydis</name>
    <dbReference type="NCBI Taxonomy" id="5270"/>
    <lineage>
        <taxon>Eukaryota</taxon>
        <taxon>Fungi</taxon>
        <taxon>Dikarya</taxon>
        <taxon>Basidiomycota</taxon>
        <taxon>Ustilaginomycotina</taxon>
        <taxon>Ustilaginomycetes</taxon>
        <taxon>Ustilaginales</taxon>
        <taxon>Ustilaginaceae</taxon>
        <taxon>Mycosarcoma</taxon>
    </lineage>
</organism>
<protein>
    <recommendedName>
        <fullName>RNA polymerase II holoenzyme cyclin-like subunit</fullName>
    </recommendedName>
</protein>